<protein>
    <recommendedName>
        <fullName>Dimethyladenosine transferase 1, mitochondrial</fullName>
        <ecNumber>2.1.1.-</ecNumber>
    </recommendedName>
    <alternativeName>
        <fullName>Mitochondrial 12S rRNA dimethylase 1</fullName>
    </alternativeName>
    <alternativeName>
        <fullName>Mitochondrial transcription factor B1</fullName>
    </alternativeName>
    <alternativeName>
        <fullName>S-adenosylmethionine-6-N', N'-adenosyl(rRNA) dimethyltransferase 1</fullName>
    </alternativeName>
</protein>
<sequence>MTMRLPPLPTIGELIRLFGLSAKQQLSQNFLLDLNITDKIVRSSGDLTNKTVIEVGPGPGGLTRSILKAGAKKLVVIEKDRRFLPALEVLRHAAGNIDGSPWEEAFLTKSEMDAKRYMSYAPNKSRMQIVMNDVLRVDEQEILQHIHAPIDSNDKTQWENMAPITIIGNLPFAISTELTIKWLKQIQGRHGAFRFGRAEFILMFQKEVADRLIANPGTKQYSRLTVMTQQLCSVKKLSDIPGSAFVPKPDVDASLVSMVPRVTPLGVNVPTPTLEYVCRQVFGQRRKMINNSVKTLGPEAEILLARAHIDPTLRPEQLTVPQWCDLARAYQQWENKPQWAPAL</sequence>
<reference key="1">
    <citation type="journal article" date="2006" name="Mol. Biol. Evol.">
        <title>Homologs of mitochondrial transcription factor B, sparsely distributed within the eukaryotic radiation, are likely derived from the dimethyladenosine methyltransferase of the mitochondrial endosymbiont.</title>
        <authorList>
            <person name="Shutt T.E."/>
            <person name="Gray M.W."/>
        </authorList>
    </citation>
    <scope>NUCLEOTIDE SEQUENCE [GENOMIC DNA]</scope>
</reference>
<evidence type="ECO:0000250" key="1"/>
<evidence type="ECO:0000255" key="2"/>
<evidence type="ECO:0000305" key="3"/>
<comment type="function">
    <text evidence="1">Probable S-adenosyl-L-methionine-dependent methyltransferase which specifically dimethylates mitochondrial 12S rRNA at the conserved stem loop. Also required for basal transcription of mitochondrial DNA. Stimulates transcription independently of the methyltransferase activity (By similarity).</text>
</comment>
<comment type="subcellular location">
    <subcellularLocation>
        <location evidence="1">Mitochondrion</location>
    </subcellularLocation>
</comment>
<comment type="similarity">
    <text evidence="3">Belongs to the class I-like SAM-binding methyltransferase superfamily. rRNA adenine N(6)-methyltransferase family. KsgA subfamily.</text>
</comment>
<dbReference type="EC" id="2.1.1.-"/>
<dbReference type="EMBL" id="DQ295025">
    <property type="protein sequence ID" value="ABB97064.1"/>
    <property type="molecule type" value="Genomic_DNA"/>
</dbReference>
<dbReference type="SMR" id="Q1A705"/>
<dbReference type="GO" id="GO:0005759">
    <property type="term" value="C:mitochondrial matrix"/>
    <property type="evidence" value="ECO:0007669"/>
    <property type="project" value="TreeGrafter"/>
</dbReference>
<dbReference type="GO" id="GO:0034246">
    <property type="term" value="F:mitochondrial transcription factor activity"/>
    <property type="evidence" value="ECO:0007669"/>
    <property type="project" value="TreeGrafter"/>
</dbReference>
<dbReference type="GO" id="GO:0003723">
    <property type="term" value="F:RNA binding"/>
    <property type="evidence" value="ECO:0007669"/>
    <property type="project" value="UniProtKB-KW"/>
</dbReference>
<dbReference type="GO" id="GO:0000179">
    <property type="term" value="F:rRNA (adenine-N6,N6-)-dimethyltransferase activity"/>
    <property type="evidence" value="ECO:0007669"/>
    <property type="project" value="InterPro"/>
</dbReference>
<dbReference type="GO" id="GO:0006391">
    <property type="term" value="P:transcription initiation at mitochondrial promoter"/>
    <property type="evidence" value="ECO:0007669"/>
    <property type="project" value="TreeGrafter"/>
</dbReference>
<dbReference type="CDD" id="cd02440">
    <property type="entry name" value="AdoMet_MTases"/>
    <property type="match status" value="1"/>
</dbReference>
<dbReference type="Gene3D" id="1.10.8.100">
    <property type="entry name" value="Ribosomal RNA adenine dimethylase-like, domain 2"/>
    <property type="match status" value="1"/>
</dbReference>
<dbReference type="Gene3D" id="3.40.50.150">
    <property type="entry name" value="Vaccinia Virus protein VP39"/>
    <property type="match status" value="1"/>
</dbReference>
<dbReference type="HAMAP" id="MF_00607">
    <property type="entry name" value="16SrRNA_methyltr_A"/>
    <property type="match status" value="1"/>
</dbReference>
<dbReference type="InterPro" id="IPR001737">
    <property type="entry name" value="KsgA/Erm"/>
</dbReference>
<dbReference type="InterPro" id="IPR023165">
    <property type="entry name" value="rRNA_Ade_diMease-like_C"/>
</dbReference>
<dbReference type="InterPro" id="IPR020596">
    <property type="entry name" value="rRNA_Ade_Mease_Trfase_CS"/>
</dbReference>
<dbReference type="InterPro" id="IPR020598">
    <property type="entry name" value="rRNA_Ade_methylase_Trfase_N"/>
</dbReference>
<dbReference type="InterPro" id="IPR011530">
    <property type="entry name" value="rRNA_adenine_dimethylase"/>
</dbReference>
<dbReference type="InterPro" id="IPR029063">
    <property type="entry name" value="SAM-dependent_MTases_sf"/>
</dbReference>
<dbReference type="PANTHER" id="PTHR11727">
    <property type="entry name" value="DIMETHYLADENOSINE TRANSFERASE"/>
    <property type="match status" value="1"/>
</dbReference>
<dbReference type="PANTHER" id="PTHR11727:SF17">
    <property type="entry name" value="DIMETHYLADENOSINE TRANSFERASE 1, MITOCHONDRIAL"/>
    <property type="match status" value="1"/>
</dbReference>
<dbReference type="Pfam" id="PF00398">
    <property type="entry name" value="RrnaAD"/>
    <property type="match status" value="2"/>
</dbReference>
<dbReference type="SMART" id="SM00650">
    <property type="entry name" value="rADc"/>
    <property type="match status" value="1"/>
</dbReference>
<dbReference type="SUPFAM" id="SSF53335">
    <property type="entry name" value="S-adenosyl-L-methionine-dependent methyltransferases"/>
    <property type="match status" value="1"/>
</dbReference>
<dbReference type="PROSITE" id="PS01131">
    <property type="entry name" value="RRNA_A_DIMETH"/>
    <property type="match status" value="1"/>
</dbReference>
<dbReference type="PROSITE" id="PS51689">
    <property type="entry name" value="SAM_RNA_A_N6_MT"/>
    <property type="match status" value="1"/>
</dbReference>
<keyword id="KW-0489">Methyltransferase</keyword>
<keyword id="KW-0496">Mitochondrion</keyword>
<keyword id="KW-0694">RNA-binding</keyword>
<keyword id="KW-0698">rRNA processing</keyword>
<keyword id="KW-0949">S-adenosyl-L-methionine</keyword>
<keyword id="KW-0804">Transcription</keyword>
<keyword id="KW-0805">Transcription regulation</keyword>
<keyword id="KW-0808">Transferase</keyword>
<keyword id="KW-0809">Transit peptide</keyword>
<accession>Q1A705</accession>
<proteinExistence type="inferred from homology"/>
<organism>
    <name type="scientific">Vermamoeba vermiformis</name>
    <name type="common">Amoeba</name>
    <name type="synonym">Hartmannella vermiformis</name>
    <dbReference type="NCBI Taxonomy" id="5778"/>
    <lineage>
        <taxon>Eukaryota</taxon>
        <taxon>Amoebozoa</taxon>
        <taxon>Tubulinea</taxon>
        <taxon>Echinamoebida</taxon>
        <taxon>Vermamoeba</taxon>
    </lineage>
</organism>
<name>TFB1M_VERVE</name>
<feature type="transit peptide" description="Mitochondrion" evidence="2">
    <location>
        <begin position="1"/>
        <end status="unknown"/>
    </location>
</feature>
<feature type="chain" id="PRO_0000273186" description="Dimethyladenosine transferase 1, mitochondrial">
    <location>
        <begin status="unknown"/>
        <end position="343"/>
    </location>
</feature>
<feature type="binding site" evidence="1">
    <location>
        <begin position="28"/>
        <end position="31"/>
    </location>
    <ligand>
        <name>S-adenosyl-L-methionine</name>
        <dbReference type="ChEBI" id="CHEBI:59789"/>
    </ligand>
</feature>
<feature type="binding site" evidence="1">
    <location>
        <position position="29"/>
    </location>
    <ligand>
        <name>S-adenosyl-L-methionine</name>
        <dbReference type="ChEBI" id="CHEBI:59789"/>
    </ligand>
</feature>
<feature type="binding site" evidence="1">
    <location>
        <position position="31"/>
    </location>
    <ligand>
        <name>S-adenosyl-L-methionine</name>
        <dbReference type="ChEBI" id="CHEBI:59789"/>
    </ligand>
</feature>
<feature type="binding site" evidence="1">
    <location>
        <position position="56"/>
    </location>
    <ligand>
        <name>S-adenosyl-L-methionine</name>
        <dbReference type="ChEBI" id="CHEBI:59789"/>
    </ligand>
</feature>
<feature type="binding site" evidence="1">
    <location>
        <position position="78"/>
    </location>
    <ligand>
        <name>S-adenosyl-L-methionine</name>
        <dbReference type="ChEBI" id="CHEBI:59789"/>
    </ligand>
</feature>
<feature type="binding site" evidence="1">
    <location>
        <position position="133"/>
    </location>
    <ligand>
        <name>S-adenosyl-L-methionine</name>
        <dbReference type="ChEBI" id="CHEBI:59789"/>
    </ligand>
</feature>
<feature type="binding site" evidence="1">
    <location>
        <position position="169"/>
    </location>
    <ligand>
        <name>S-adenosyl-L-methionine</name>
        <dbReference type="ChEBI" id="CHEBI:59789"/>
    </ligand>
</feature>